<proteinExistence type="evidence at transcript level"/>
<organism>
    <name type="scientific">Triticum aestivum</name>
    <name type="common">Wheat</name>
    <dbReference type="NCBI Taxonomy" id="4565"/>
    <lineage>
        <taxon>Eukaryota</taxon>
        <taxon>Viridiplantae</taxon>
        <taxon>Streptophyta</taxon>
        <taxon>Embryophyta</taxon>
        <taxon>Tracheophyta</taxon>
        <taxon>Spermatophyta</taxon>
        <taxon>Magnoliopsida</taxon>
        <taxon>Liliopsida</taxon>
        <taxon>Poales</taxon>
        <taxon>Poaceae</taxon>
        <taxon>BOP clade</taxon>
        <taxon>Pooideae</taxon>
        <taxon>Triticodae</taxon>
        <taxon>Triticeae</taxon>
        <taxon>Triticinae</taxon>
        <taxon>Triticum</taxon>
    </lineage>
</organism>
<name>EM4_WHEAT</name>
<dbReference type="EMBL" id="X73228">
    <property type="protein sequence ID" value="CAB59731.1"/>
    <property type="molecule type" value="Genomic_DNA"/>
</dbReference>
<dbReference type="PIR" id="S43332">
    <property type="entry name" value="S43332"/>
</dbReference>
<dbReference type="STRING" id="4565.P42755"/>
<dbReference type="PaxDb" id="4565-Traes_1AL_F9DD02F23.1"/>
<dbReference type="eggNOG" id="ENOG502S1DH">
    <property type="taxonomic scope" value="Eukaryota"/>
</dbReference>
<dbReference type="Proteomes" id="UP000019116">
    <property type="component" value="Unplaced"/>
</dbReference>
<dbReference type="GO" id="GO:0009737">
    <property type="term" value="P:response to abscisic acid"/>
    <property type="evidence" value="ECO:0000318"/>
    <property type="project" value="GO_Central"/>
</dbReference>
<dbReference type="InterPro" id="IPR038956">
    <property type="entry name" value="LEA_5"/>
</dbReference>
<dbReference type="InterPro" id="IPR022377">
    <property type="entry name" value="Sm_Hydphi_plant_seed_CS"/>
</dbReference>
<dbReference type="InterPro" id="IPR000389">
    <property type="entry name" value="Small_hydrophilic_seed_prot"/>
</dbReference>
<dbReference type="PANTHER" id="PTHR34671">
    <property type="entry name" value="EM-LIKE PROTEIN GEA1"/>
    <property type="match status" value="1"/>
</dbReference>
<dbReference type="PANTHER" id="PTHR34671:SF19">
    <property type="entry name" value="EMBRYONIC ABUNDANT PROTEIN 1"/>
    <property type="match status" value="1"/>
</dbReference>
<dbReference type="Pfam" id="PF00477">
    <property type="entry name" value="LEA_5"/>
    <property type="match status" value="1"/>
</dbReference>
<dbReference type="PROSITE" id="PS00431">
    <property type="entry name" value="SMALL_HYDR_PLANT_SEED"/>
    <property type="match status" value="1"/>
</dbReference>
<feature type="chain" id="PRO_0000185692" description="Em protein H5">
    <location>
        <begin position="1"/>
        <end position="93"/>
    </location>
</feature>
<feature type="region of interest" description="Disordered" evidence="1">
    <location>
        <begin position="1"/>
        <end position="93"/>
    </location>
</feature>
<feature type="compositionally biased region" description="Basic and acidic residues" evidence="1">
    <location>
        <begin position="7"/>
        <end position="19"/>
    </location>
</feature>
<feature type="compositionally biased region" description="Basic and acidic residues" evidence="1">
    <location>
        <begin position="32"/>
        <end position="62"/>
    </location>
</feature>
<feature type="compositionally biased region" description="Basic and acidic residues" evidence="1">
    <location>
        <begin position="73"/>
        <end position="93"/>
    </location>
</feature>
<reference key="1">
    <citation type="journal article" date="1993" name="Plant Mol. Biol.">
        <title>Sequence analysis of two tandemly linked Em genes from wheat.</title>
        <authorList>
            <person name="Futers T.S."/>
            <person name="Onde S."/>
            <person name="Turet M."/>
            <person name="Cuming A.C."/>
        </authorList>
    </citation>
    <scope>NUCLEOTIDE SEQUENCE [GENOMIC DNA]</scope>
    <source>
        <strain>cv. Chinese Spring</strain>
        <tissue>Dry seed</tissue>
    </source>
</reference>
<keyword id="KW-1185">Reference proteome</keyword>
<keyword id="KW-0346">Stress response</keyword>
<sequence length="93" mass="10060">MASGQQERSELDRMAREGETVVPGGTGGKSLEAQEHLADGRSRGGETRKEQLGEEGYREMGRKGGLSTMEESGGERAAREGIEIDESKFKTKS</sequence>
<gene>
    <name type="primary">EMH5</name>
</gene>
<evidence type="ECO:0000256" key="1">
    <source>
        <dbReference type="SAM" id="MobiDB-lite"/>
    </source>
</evidence>
<evidence type="ECO:0000305" key="2"/>
<accession>P42755</accession>
<comment type="function">
    <text>It is thought to provide protection for the cytoplasm during the desiccation stage of embryo development.</text>
</comment>
<comment type="developmental stage">
    <text>Expressed principally in the later stages of embryogenesis prior to dehydration of the grain.</text>
</comment>
<comment type="induction">
    <text>By abscisic acid (ABA) and osmotic stress.</text>
</comment>
<comment type="miscellaneous">
    <text>Wheat contains at least 10 different genes for Em protein.</text>
</comment>
<comment type="similarity">
    <text evidence="2">Belongs to the small hydrophilic plant seed protein family.</text>
</comment>
<protein>
    <recommendedName>
        <fullName>Em protein H5</fullName>
    </recommendedName>
</protein>